<evidence type="ECO:0000255" key="1">
    <source>
        <dbReference type="HAMAP-Rule" id="MF_00222"/>
    </source>
</evidence>
<protein>
    <recommendedName>
        <fullName evidence="1">Shikimate dehydrogenase (NADP(+))</fullName>
        <shortName evidence="1">SDH</shortName>
        <ecNumber evidence="1">1.1.1.25</ecNumber>
    </recommendedName>
</protein>
<feature type="chain" id="PRO_0000325097" description="Shikimate dehydrogenase (NADP(+))">
    <location>
        <begin position="1"/>
        <end position="270"/>
    </location>
</feature>
<feature type="active site" description="Proton acceptor" evidence="1">
    <location>
        <position position="66"/>
    </location>
</feature>
<feature type="binding site" evidence="1">
    <location>
        <begin position="15"/>
        <end position="17"/>
    </location>
    <ligand>
        <name>shikimate</name>
        <dbReference type="ChEBI" id="CHEBI:36208"/>
    </ligand>
</feature>
<feature type="binding site" evidence="1">
    <location>
        <position position="62"/>
    </location>
    <ligand>
        <name>shikimate</name>
        <dbReference type="ChEBI" id="CHEBI:36208"/>
    </ligand>
</feature>
<feature type="binding site" evidence="1">
    <location>
        <position position="87"/>
    </location>
    <ligand>
        <name>shikimate</name>
        <dbReference type="ChEBI" id="CHEBI:36208"/>
    </ligand>
</feature>
<feature type="binding site" evidence="1">
    <location>
        <position position="102"/>
    </location>
    <ligand>
        <name>shikimate</name>
        <dbReference type="ChEBI" id="CHEBI:36208"/>
    </ligand>
</feature>
<feature type="binding site" evidence="1">
    <location>
        <begin position="127"/>
        <end position="131"/>
    </location>
    <ligand>
        <name>NADP(+)</name>
        <dbReference type="ChEBI" id="CHEBI:58349"/>
    </ligand>
</feature>
<feature type="binding site" evidence="1">
    <location>
        <begin position="151"/>
        <end position="156"/>
    </location>
    <ligand>
        <name>NADP(+)</name>
        <dbReference type="ChEBI" id="CHEBI:58349"/>
    </ligand>
</feature>
<feature type="binding site" evidence="1">
    <location>
        <position position="214"/>
    </location>
    <ligand>
        <name>NADP(+)</name>
        <dbReference type="ChEBI" id="CHEBI:58349"/>
    </ligand>
</feature>
<feature type="binding site" evidence="1">
    <location>
        <position position="216"/>
    </location>
    <ligand>
        <name>shikimate</name>
        <dbReference type="ChEBI" id="CHEBI:36208"/>
    </ligand>
</feature>
<feature type="binding site" evidence="1">
    <location>
        <position position="238"/>
    </location>
    <ligand>
        <name>NADP(+)</name>
        <dbReference type="ChEBI" id="CHEBI:58349"/>
    </ligand>
</feature>
<accession>Q0A4S2</accession>
<comment type="function">
    <text evidence="1">Involved in the biosynthesis of the chorismate, which leads to the biosynthesis of aromatic amino acids. Catalyzes the reversible NADPH linked reduction of 3-dehydroshikimate (DHSA) to yield shikimate (SA).</text>
</comment>
<comment type="catalytic activity">
    <reaction evidence="1">
        <text>shikimate + NADP(+) = 3-dehydroshikimate + NADPH + H(+)</text>
        <dbReference type="Rhea" id="RHEA:17737"/>
        <dbReference type="ChEBI" id="CHEBI:15378"/>
        <dbReference type="ChEBI" id="CHEBI:16630"/>
        <dbReference type="ChEBI" id="CHEBI:36208"/>
        <dbReference type="ChEBI" id="CHEBI:57783"/>
        <dbReference type="ChEBI" id="CHEBI:58349"/>
        <dbReference type="EC" id="1.1.1.25"/>
    </reaction>
</comment>
<comment type="pathway">
    <text evidence="1">Metabolic intermediate biosynthesis; chorismate biosynthesis; chorismate from D-erythrose 4-phosphate and phosphoenolpyruvate: step 4/7.</text>
</comment>
<comment type="subunit">
    <text evidence="1">Homodimer.</text>
</comment>
<comment type="similarity">
    <text evidence="1">Belongs to the shikimate dehydrogenase family.</text>
</comment>
<gene>
    <name evidence="1" type="primary">aroE</name>
    <name type="ordered locus">Mlg_2825</name>
</gene>
<reference key="1">
    <citation type="submission" date="2006-08" db="EMBL/GenBank/DDBJ databases">
        <title>Complete sequence of Alkalilimnicola ehrilichei MLHE-1.</title>
        <authorList>
            <person name="Copeland A."/>
            <person name="Lucas S."/>
            <person name="Lapidus A."/>
            <person name="Barry K."/>
            <person name="Detter J.C."/>
            <person name="Glavina del Rio T."/>
            <person name="Hammon N."/>
            <person name="Israni S."/>
            <person name="Dalin E."/>
            <person name="Tice H."/>
            <person name="Pitluck S."/>
            <person name="Sims D."/>
            <person name="Brettin T."/>
            <person name="Bruce D."/>
            <person name="Han C."/>
            <person name="Tapia R."/>
            <person name="Gilna P."/>
            <person name="Schmutz J."/>
            <person name="Larimer F."/>
            <person name="Land M."/>
            <person name="Hauser L."/>
            <person name="Kyrpides N."/>
            <person name="Mikhailova N."/>
            <person name="Oremland R.S."/>
            <person name="Hoeft S.E."/>
            <person name="Switzer-Blum J."/>
            <person name="Kulp T."/>
            <person name="King G."/>
            <person name="Tabita R."/>
            <person name="Witte B."/>
            <person name="Santini J.M."/>
            <person name="Basu P."/>
            <person name="Hollibaugh J.T."/>
            <person name="Xie G."/>
            <person name="Stolz J.F."/>
            <person name="Richardson P."/>
        </authorList>
    </citation>
    <scope>NUCLEOTIDE SEQUENCE [LARGE SCALE GENOMIC DNA]</scope>
    <source>
        <strain>ATCC BAA-1101 / DSM 17681 / MLHE-1</strain>
    </source>
</reference>
<name>AROE_ALKEH</name>
<organism>
    <name type="scientific">Alkalilimnicola ehrlichii (strain ATCC BAA-1101 / DSM 17681 / MLHE-1)</name>
    <dbReference type="NCBI Taxonomy" id="187272"/>
    <lineage>
        <taxon>Bacteria</taxon>
        <taxon>Pseudomonadati</taxon>
        <taxon>Pseudomonadota</taxon>
        <taxon>Gammaproteobacteria</taxon>
        <taxon>Chromatiales</taxon>
        <taxon>Ectothiorhodospiraceae</taxon>
        <taxon>Alkalilimnicola</taxon>
    </lineage>
</organism>
<proteinExistence type="inferred from homology"/>
<sequence length="270" mass="28651">MTDRYAVMGNPIEHSKSPEIHRMFAEQTGQAIAYERMRVPLEGFEPAVRAFFASGGKGLNITVPFKEQAWVLVDRRAPRAERAGAVNTLLAEAGRLVGDNTDGTGLVRDLTVNHGAALQGRRVLVIGAGGAVRGVLPALLPEAPGEVVIANRTVARAEALVELFADQGRLSAVGFDRLQGPFDVVINGTSAGLAGELPPLPDDLLAPGATCYDMVYGDQPTPFVRWARAHGAAMAVDGLGMLVEQAAESFLIWRGVRPESAPVIAALRPE</sequence>
<dbReference type="EC" id="1.1.1.25" evidence="1"/>
<dbReference type="EMBL" id="CP000453">
    <property type="protein sequence ID" value="ABI58165.1"/>
    <property type="molecule type" value="Genomic_DNA"/>
</dbReference>
<dbReference type="RefSeq" id="WP_011630558.1">
    <property type="nucleotide sequence ID" value="NC_008340.1"/>
</dbReference>
<dbReference type="SMR" id="Q0A4S2"/>
<dbReference type="KEGG" id="aeh:Mlg_2825"/>
<dbReference type="eggNOG" id="COG0169">
    <property type="taxonomic scope" value="Bacteria"/>
</dbReference>
<dbReference type="HOGENOM" id="CLU_044063_2_1_6"/>
<dbReference type="OrthoDB" id="9776868at2"/>
<dbReference type="UniPathway" id="UPA00053">
    <property type="reaction ID" value="UER00087"/>
</dbReference>
<dbReference type="Proteomes" id="UP000001962">
    <property type="component" value="Chromosome"/>
</dbReference>
<dbReference type="GO" id="GO:0005829">
    <property type="term" value="C:cytosol"/>
    <property type="evidence" value="ECO:0007669"/>
    <property type="project" value="TreeGrafter"/>
</dbReference>
<dbReference type="GO" id="GO:0050661">
    <property type="term" value="F:NADP binding"/>
    <property type="evidence" value="ECO:0007669"/>
    <property type="project" value="InterPro"/>
</dbReference>
<dbReference type="GO" id="GO:0004764">
    <property type="term" value="F:shikimate 3-dehydrogenase (NADP+) activity"/>
    <property type="evidence" value="ECO:0007669"/>
    <property type="project" value="UniProtKB-UniRule"/>
</dbReference>
<dbReference type="GO" id="GO:0008652">
    <property type="term" value="P:amino acid biosynthetic process"/>
    <property type="evidence" value="ECO:0007669"/>
    <property type="project" value="UniProtKB-KW"/>
</dbReference>
<dbReference type="GO" id="GO:0009073">
    <property type="term" value="P:aromatic amino acid family biosynthetic process"/>
    <property type="evidence" value="ECO:0007669"/>
    <property type="project" value="UniProtKB-KW"/>
</dbReference>
<dbReference type="GO" id="GO:0009423">
    <property type="term" value="P:chorismate biosynthetic process"/>
    <property type="evidence" value="ECO:0007669"/>
    <property type="project" value="UniProtKB-UniRule"/>
</dbReference>
<dbReference type="GO" id="GO:0019632">
    <property type="term" value="P:shikimate metabolic process"/>
    <property type="evidence" value="ECO:0007669"/>
    <property type="project" value="InterPro"/>
</dbReference>
<dbReference type="CDD" id="cd01065">
    <property type="entry name" value="NAD_bind_Shikimate_DH"/>
    <property type="match status" value="1"/>
</dbReference>
<dbReference type="FunFam" id="3.40.50.10860:FF:000006">
    <property type="entry name" value="Shikimate dehydrogenase (NADP(+))"/>
    <property type="match status" value="1"/>
</dbReference>
<dbReference type="FunFam" id="3.40.50.720:FF:000104">
    <property type="entry name" value="Shikimate dehydrogenase (NADP(+))"/>
    <property type="match status" value="1"/>
</dbReference>
<dbReference type="Gene3D" id="3.40.50.10860">
    <property type="entry name" value="Leucine Dehydrogenase, chain A, domain 1"/>
    <property type="match status" value="1"/>
</dbReference>
<dbReference type="Gene3D" id="3.40.50.720">
    <property type="entry name" value="NAD(P)-binding Rossmann-like Domain"/>
    <property type="match status" value="1"/>
</dbReference>
<dbReference type="HAMAP" id="MF_00222">
    <property type="entry name" value="Shikimate_DH_AroE"/>
    <property type="match status" value="1"/>
</dbReference>
<dbReference type="InterPro" id="IPR046346">
    <property type="entry name" value="Aminoacid_DH-like_N_sf"/>
</dbReference>
<dbReference type="InterPro" id="IPR036291">
    <property type="entry name" value="NAD(P)-bd_dom_sf"/>
</dbReference>
<dbReference type="InterPro" id="IPR041121">
    <property type="entry name" value="SDH_C"/>
</dbReference>
<dbReference type="InterPro" id="IPR011342">
    <property type="entry name" value="Shikimate_DH"/>
</dbReference>
<dbReference type="InterPro" id="IPR013708">
    <property type="entry name" value="Shikimate_DH-bd_N"/>
</dbReference>
<dbReference type="InterPro" id="IPR022893">
    <property type="entry name" value="Shikimate_DH_fam"/>
</dbReference>
<dbReference type="InterPro" id="IPR006151">
    <property type="entry name" value="Shikm_DH/Glu-tRNA_Rdtase"/>
</dbReference>
<dbReference type="NCBIfam" id="TIGR00507">
    <property type="entry name" value="aroE"/>
    <property type="match status" value="1"/>
</dbReference>
<dbReference type="NCBIfam" id="NF001310">
    <property type="entry name" value="PRK00258.1-2"/>
    <property type="match status" value="1"/>
</dbReference>
<dbReference type="PANTHER" id="PTHR21089:SF1">
    <property type="entry name" value="BIFUNCTIONAL 3-DEHYDROQUINATE DEHYDRATASE_SHIKIMATE DEHYDROGENASE, CHLOROPLASTIC"/>
    <property type="match status" value="1"/>
</dbReference>
<dbReference type="PANTHER" id="PTHR21089">
    <property type="entry name" value="SHIKIMATE DEHYDROGENASE"/>
    <property type="match status" value="1"/>
</dbReference>
<dbReference type="Pfam" id="PF18317">
    <property type="entry name" value="SDH_C"/>
    <property type="match status" value="1"/>
</dbReference>
<dbReference type="Pfam" id="PF01488">
    <property type="entry name" value="Shikimate_DH"/>
    <property type="match status" value="1"/>
</dbReference>
<dbReference type="Pfam" id="PF08501">
    <property type="entry name" value="Shikimate_dh_N"/>
    <property type="match status" value="1"/>
</dbReference>
<dbReference type="SUPFAM" id="SSF53223">
    <property type="entry name" value="Aminoacid dehydrogenase-like, N-terminal domain"/>
    <property type="match status" value="1"/>
</dbReference>
<dbReference type="SUPFAM" id="SSF51735">
    <property type="entry name" value="NAD(P)-binding Rossmann-fold domains"/>
    <property type="match status" value="1"/>
</dbReference>
<keyword id="KW-0028">Amino-acid biosynthesis</keyword>
<keyword id="KW-0057">Aromatic amino acid biosynthesis</keyword>
<keyword id="KW-0521">NADP</keyword>
<keyword id="KW-0560">Oxidoreductase</keyword>
<keyword id="KW-1185">Reference proteome</keyword>